<dbReference type="EMBL" id="U38804">
    <property type="protein sequence ID" value="AAC08264.1"/>
    <property type="molecule type" value="Genomic_DNA"/>
</dbReference>
<dbReference type="PIR" id="S73299">
    <property type="entry name" value="S73299"/>
</dbReference>
<dbReference type="RefSeq" id="NP_053988.1">
    <property type="nucleotide sequence ID" value="NC_000925.1"/>
</dbReference>
<dbReference type="SMR" id="P51378"/>
<dbReference type="GeneID" id="810017"/>
<dbReference type="GO" id="GO:0009535">
    <property type="term" value="C:chloroplast thylakoid membrane"/>
    <property type="evidence" value="ECO:0007669"/>
    <property type="project" value="UniProtKB-SubCell"/>
</dbReference>
<dbReference type="GO" id="GO:0030089">
    <property type="term" value="C:phycobilisome"/>
    <property type="evidence" value="ECO:0007669"/>
    <property type="project" value="UniProtKB-KW"/>
</dbReference>
<dbReference type="GO" id="GO:0015979">
    <property type="term" value="P:photosynthesis"/>
    <property type="evidence" value="ECO:0007669"/>
    <property type="project" value="UniProtKB-KW"/>
</dbReference>
<dbReference type="CDD" id="cd14770">
    <property type="entry name" value="PC-PEC_alpha"/>
    <property type="match status" value="1"/>
</dbReference>
<dbReference type="Gene3D" id="1.10.490.20">
    <property type="entry name" value="Phycocyanins"/>
    <property type="match status" value="1"/>
</dbReference>
<dbReference type="InterPro" id="IPR009050">
    <property type="entry name" value="Globin-like_sf"/>
</dbReference>
<dbReference type="InterPro" id="IPR012128">
    <property type="entry name" value="Phycobilisome_asu/bsu"/>
</dbReference>
<dbReference type="InterPro" id="IPR038719">
    <property type="entry name" value="Phycobilisome_asu/bsu_sf"/>
</dbReference>
<dbReference type="InterPro" id="IPR006246">
    <property type="entry name" value="Phycocyanin_a"/>
</dbReference>
<dbReference type="NCBIfam" id="TIGR01338">
    <property type="entry name" value="phycocy_alpha"/>
    <property type="match status" value="1"/>
</dbReference>
<dbReference type="PANTHER" id="PTHR34011:SF4">
    <property type="entry name" value="C-PHYCOCYANIN ALPHA SUBUNIT"/>
    <property type="match status" value="1"/>
</dbReference>
<dbReference type="PANTHER" id="PTHR34011">
    <property type="entry name" value="PHYCOBILISOME 32.1 KDA LINKER POLYPEPTIDE, PHYCOCYANIN-ASSOCIATED, ROD 2-RELATED"/>
    <property type="match status" value="1"/>
</dbReference>
<dbReference type="Pfam" id="PF00502">
    <property type="entry name" value="Phycobilisome"/>
    <property type="match status" value="1"/>
</dbReference>
<dbReference type="PIRSF" id="PIRSF000081">
    <property type="entry name" value="Phycocyanin"/>
    <property type="match status" value="1"/>
</dbReference>
<dbReference type="SUPFAM" id="SSF46458">
    <property type="entry name" value="Globin-like"/>
    <property type="match status" value="1"/>
</dbReference>
<keyword id="KW-0042">Antenna complex</keyword>
<keyword id="KW-0089">Bile pigment</keyword>
<keyword id="KW-0150">Chloroplast</keyword>
<keyword id="KW-0157">Chromophore</keyword>
<keyword id="KW-0249">Electron transport</keyword>
<keyword id="KW-0472">Membrane</keyword>
<keyword id="KW-0602">Photosynthesis</keyword>
<keyword id="KW-0605">Phycobilisome</keyword>
<keyword id="KW-0934">Plastid</keyword>
<keyword id="KW-0793">Thylakoid</keyword>
<keyword id="KW-0813">Transport</keyword>
<reference key="1">
    <citation type="journal article" date="1995" name="Plant Mol. Biol. Rep.">
        <title>Complete nucleotide sequence of the Porphyra purpurea chloroplast genome.</title>
        <authorList>
            <person name="Reith M.E."/>
            <person name="Munholland J."/>
        </authorList>
    </citation>
    <scope>NUCLEOTIDE SEQUENCE [LARGE SCALE GENOMIC DNA]</scope>
    <source>
        <strain>Avonport</strain>
    </source>
</reference>
<gene>
    <name type="primary">cpcA</name>
</gene>
<accession>P51378</accession>
<sequence>MKTPITEAIASADSQGRFLSNGELQAVNGRYQRAAASLGAARSLTNNAQRLITGAAQSVYTKFPYVTQMPGPTYASSAIGKAKCARDIGYYLRMVTYCLVVGATGPMDEYLVAGLEEINRSFELSPSWYVEALQYIKGSHGLSGQIGNEANVYLDYAINTLS</sequence>
<proteinExistence type="inferred from homology"/>
<protein>
    <recommendedName>
        <fullName>C-phycocyanin alpha chain</fullName>
    </recommendedName>
</protein>
<name>PHCA_PORPU</name>
<comment type="function">
    <text>Light-harvesting photosynthetic bile pigment-protein from the phycobiliprotein complex (phycobilisome, PBS). Phycocyanin is the major phycobiliprotein in the PBS rod.</text>
</comment>
<comment type="subunit">
    <text evidence="2">Heterodimer of an alpha and a beta subunit, which further assembles into trimers and the trimers into hexamers. The basic functional unit of phycobiliproteins is a ring-shaped hexamer formed from two back-to-back trimers contacting via the alpha chain subunits. The trimers are composed of alpha/beta subunit heterodimers arranged around a three-fold axis of symmetry. The phycoerythrins also contain a gamma subunit which is located in the center of the hexamer.</text>
</comment>
<comment type="subcellular location">
    <subcellularLocation>
        <location evidence="1">Plastid</location>
        <location evidence="1">Chloroplast thylakoid membrane</location>
        <topology evidence="1">Peripheral membrane protein</topology>
        <orientation evidence="1">Stromal side</orientation>
    </subcellularLocation>
    <text evidence="1">Part of the phycobilisome rod.</text>
</comment>
<comment type="PTM">
    <text evidence="2">Contains one covalently linked phycocyanobilin chromophore.</text>
</comment>
<comment type="similarity">
    <text evidence="3">Belongs to the phycobiliprotein family.</text>
</comment>
<evidence type="ECO:0000250" key="1"/>
<evidence type="ECO:0000250" key="2">
    <source>
        <dbReference type="UniProtKB" id="P00306"/>
    </source>
</evidence>
<evidence type="ECO:0000305" key="3"/>
<feature type="chain" id="PRO_0000199123" description="C-phycocyanin alpha chain">
    <location>
        <begin position="1"/>
        <end position="162"/>
    </location>
</feature>
<feature type="binding site" description="covalent" evidence="2">
    <location>
        <position position="84"/>
    </location>
    <ligand>
        <name>(2R,3E)-phycocyanobilin</name>
        <dbReference type="ChEBI" id="CHEBI:85275"/>
    </ligand>
</feature>
<organism>
    <name type="scientific">Porphyra purpurea</name>
    <name type="common">Red seaweed</name>
    <name type="synonym">Ulva purpurea</name>
    <dbReference type="NCBI Taxonomy" id="2787"/>
    <lineage>
        <taxon>Eukaryota</taxon>
        <taxon>Rhodophyta</taxon>
        <taxon>Bangiophyceae</taxon>
        <taxon>Bangiales</taxon>
        <taxon>Bangiaceae</taxon>
        <taxon>Porphyra</taxon>
    </lineage>
</organism>
<geneLocation type="chloroplast"/>